<proteinExistence type="inferred from homology"/>
<evidence type="ECO:0000255" key="1">
    <source>
        <dbReference type="HAMAP-Rule" id="MF_00193"/>
    </source>
</evidence>
<sequence>MKAQILREMKVLTAIEPEFEVQRRVAFIKTKLKEARSKALVLGISGGVDSSTAGRLCQLAVDSLNHENSQGGYQFIAVRLPYQIQKDEHEAQLACQFIQPSKLVTVNVHQGVDGVHSATVAALAEAGLPLPDVAKVDFVKGNVKARMRMIAQYELAGLVGGLVVGTDHSAENITGFYTKWGDGACDLAPLFGLNKRQVRQLAAYLGAPKSLVHKAPTADLEDNKPLLEDEVALGLTYAQIDDFLEGKDVGKAVEDKLIGIYKATQHKRQPIPTIYD</sequence>
<comment type="function">
    <text evidence="1">Catalyzes the ATP-dependent amidation of deamido-NAD to form NAD. Uses ammonia as a nitrogen source.</text>
</comment>
<comment type="catalytic activity">
    <reaction evidence="1">
        <text>deamido-NAD(+) + NH4(+) + ATP = AMP + diphosphate + NAD(+) + H(+)</text>
        <dbReference type="Rhea" id="RHEA:21188"/>
        <dbReference type="ChEBI" id="CHEBI:15378"/>
        <dbReference type="ChEBI" id="CHEBI:28938"/>
        <dbReference type="ChEBI" id="CHEBI:30616"/>
        <dbReference type="ChEBI" id="CHEBI:33019"/>
        <dbReference type="ChEBI" id="CHEBI:57540"/>
        <dbReference type="ChEBI" id="CHEBI:58437"/>
        <dbReference type="ChEBI" id="CHEBI:456215"/>
        <dbReference type="EC" id="6.3.1.5"/>
    </reaction>
</comment>
<comment type="pathway">
    <text evidence="1">Cofactor biosynthesis; NAD(+) biosynthesis; NAD(+) from deamido-NAD(+) (ammonia route): step 1/1.</text>
</comment>
<comment type="subunit">
    <text evidence="1">Homodimer.</text>
</comment>
<comment type="similarity">
    <text evidence="1">Belongs to the NAD synthetase family.</text>
</comment>
<accession>A6WPH7</accession>
<keyword id="KW-0067">ATP-binding</keyword>
<keyword id="KW-0436">Ligase</keyword>
<keyword id="KW-0460">Magnesium</keyword>
<keyword id="KW-0479">Metal-binding</keyword>
<keyword id="KW-0520">NAD</keyword>
<keyword id="KW-0547">Nucleotide-binding</keyword>
<dbReference type="EC" id="6.3.1.5" evidence="1"/>
<dbReference type="EMBL" id="CP000753">
    <property type="protein sequence ID" value="ABS08716.1"/>
    <property type="molecule type" value="Genomic_DNA"/>
</dbReference>
<dbReference type="RefSeq" id="WP_012089470.1">
    <property type="nucleotide sequence ID" value="NC_009665.1"/>
</dbReference>
<dbReference type="SMR" id="A6WPH7"/>
<dbReference type="KEGG" id="sbm:Shew185_2581"/>
<dbReference type="HOGENOM" id="CLU_059327_3_0_6"/>
<dbReference type="UniPathway" id="UPA00253">
    <property type="reaction ID" value="UER00333"/>
</dbReference>
<dbReference type="GO" id="GO:0005737">
    <property type="term" value="C:cytoplasm"/>
    <property type="evidence" value="ECO:0007669"/>
    <property type="project" value="InterPro"/>
</dbReference>
<dbReference type="GO" id="GO:0005524">
    <property type="term" value="F:ATP binding"/>
    <property type="evidence" value="ECO:0007669"/>
    <property type="project" value="UniProtKB-UniRule"/>
</dbReference>
<dbReference type="GO" id="GO:0004359">
    <property type="term" value="F:glutaminase activity"/>
    <property type="evidence" value="ECO:0007669"/>
    <property type="project" value="InterPro"/>
</dbReference>
<dbReference type="GO" id="GO:0046872">
    <property type="term" value="F:metal ion binding"/>
    <property type="evidence" value="ECO:0007669"/>
    <property type="project" value="UniProtKB-KW"/>
</dbReference>
<dbReference type="GO" id="GO:0003952">
    <property type="term" value="F:NAD+ synthase (glutamine-hydrolyzing) activity"/>
    <property type="evidence" value="ECO:0007669"/>
    <property type="project" value="InterPro"/>
</dbReference>
<dbReference type="GO" id="GO:0008795">
    <property type="term" value="F:NAD+ synthase activity"/>
    <property type="evidence" value="ECO:0007669"/>
    <property type="project" value="UniProtKB-UniRule"/>
</dbReference>
<dbReference type="GO" id="GO:0009435">
    <property type="term" value="P:NAD biosynthetic process"/>
    <property type="evidence" value="ECO:0007669"/>
    <property type="project" value="UniProtKB-UniRule"/>
</dbReference>
<dbReference type="CDD" id="cd00553">
    <property type="entry name" value="NAD_synthase"/>
    <property type="match status" value="1"/>
</dbReference>
<dbReference type="FunFam" id="3.40.50.620:FF:000015">
    <property type="entry name" value="NH(3)-dependent NAD(+) synthetase"/>
    <property type="match status" value="1"/>
</dbReference>
<dbReference type="Gene3D" id="3.40.50.620">
    <property type="entry name" value="HUPs"/>
    <property type="match status" value="1"/>
</dbReference>
<dbReference type="HAMAP" id="MF_00193">
    <property type="entry name" value="NadE_ammonia_dep"/>
    <property type="match status" value="1"/>
</dbReference>
<dbReference type="InterPro" id="IPR022310">
    <property type="entry name" value="NAD/GMP_synthase"/>
</dbReference>
<dbReference type="InterPro" id="IPR003694">
    <property type="entry name" value="NAD_synthase"/>
</dbReference>
<dbReference type="InterPro" id="IPR022926">
    <property type="entry name" value="NH(3)-dep_NAD(+)_synth"/>
</dbReference>
<dbReference type="InterPro" id="IPR014729">
    <property type="entry name" value="Rossmann-like_a/b/a_fold"/>
</dbReference>
<dbReference type="NCBIfam" id="TIGR00552">
    <property type="entry name" value="nadE"/>
    <property type="match status" value="1"/>
</dbReference>
<dbReference type="NCBIfam" id="NF001979">
    <property type="entry name" value="PRK00768.1"/>
    <property type="match status" value="1"/>
</dbReference>
<dbReference type="PANTHER" id="PTHR23090">
    <property type="entry name" value="NH 3 /GLUTAMINE-DEPENDENT NAD + SYNTHETASE"/>
    <property type="match status" value="1"/>
</dbReference>
<dbReference type="PANTHER" id="PTHR23090:SF7">
    <property type="entry name" value="NH(3)-DEPENDENT NAD(+) SYNTHETASE"/>
    <property type="match status" value="1"/>
</dbReference>
<dbReference type="Pfam" id="PF02540">
    <property type="entry name" value="NAD_synthase"/>
    <property type="match status" value="1"/>
</dbReference>
<dbReference type="SUPFAM" id="SSF52402">
    <property type="entry name" value="Adenine nucleotide alpha hydrolases-like"/>
    <property type="match status" value="1"/>
</dbReference>
<organism>
    <name type="scientific">Shewanella baltica (strain OS185)</name>
    <dbReference type="NCBI Taxonomy" id="402882"/>
    <lineage>
        <taxon>Bacteria</taxon>
        <taxon>Pseudomonadati</taxon>
        <taxon>Pseudomonadota</taxon>
        <taxon>Gammaproteobacteria</taxon>
        <taxon>Alteromonadales</taxon>
        <taxon>Shewanellaceae</taxon>
        <taxon>Shewanella</taxon>
    </lineage>
</organism>
<gene>
    <name evidence="1" type="primary">nadE</name>
    <name type="ordered locus">Shew185_2581</name>
</gene>
<protein>
    <recommendedName>
        <fullName evidence="1">NH(3)-dependent NAD(+) synthetase</fullName>
        <ecNumber evidence="1">6.3.1.5</ecNumber>
    </recommendedName>
</protein>
<feature type="chain" id="PRO_1000077599" description="NH(3)-dependent NAD(+) synthetase">
    <location>
        <begin position="1"/>
        <end position="276"/>
    </location>
</feature>
<feature type="binding site" evidence="1">
    <location>
        <begin position="43"/>
        <end position="50"/>
    </location>
    <ligand>
        <name>ATP</name>
        <dbReference type="ChEBI" id="CHEBI:30616"/>
    </ligand>
</feature>
<feature type="binding site" evidence="1">
    <location>
        <position position="49"/>
    </location>
    <ligand>
        <name>Mg(2+)</name>
        <dbReference type="ChEBI" id="CHEBI:18420"/>
    </ligand>
</feature>
<feature type="binding site" evidence="1">
    <location>
        <position position="146"/>
    </location>
    <ligand>
        <name>deamido-NAD(+)</name>
        <dbReference type="ChEBI" id="CHEBI:58437"/>
    </ligand>
</feature>
<feature type="binding site" evidence="1">
    <location>
        <position position="166"/>
    </location>
    <ligand>
        <name>ATP</name>
        <dbReference type="ChEBI" id="CHEBI:30616"/>
    </ligand>
</feature>
<feature type="binding site" evidence="1">
    <location>
        <position position="171"/>
    </location>
    <ligand>
        <name>Mg(2+)</name>
        <dbReference type="ChEBI" id="CHEBI:18420"/>
    </ligand>
</feature>
<feature type="binding site" evidence="1">
    <location>
        <position position="179"/>
    </location>
    <ligand>
        <name>deamido-NAD(+)</name>
        <dbReference type="ChEBI" id="CHEBI:58437"/>
    </ligand>
</feature>
<feature type="binding site" evidence="1">
    <location>
        <position position="186"/>
    </location>
    <ligand>
        <name>deamido-NAD(+)</name>
        <dbReference type="ChEBI" id="CHEBI:58437"/>
    </ligand>
</feature>
<feature type="binding site" evidence="1">
    <location>
        <position position="195"/>
    </location>
    <ligand>
        <name>ATP</name>
        <dbReference type="ChEBI" id="CHEBI:30616"/>
    </ligand>
</feature>
<feature type="binding site" evidence="1">
    <location>
        <position position="217"/>
    </location>
    <ligand>
        <name>ATP</name>
        <dbReference type="ChEBI" id="CHEBI:30616"/>
    </ligand>
</feature>
<feature type="binding site" evidence="1">
    <location>
        <begin position="266"/>
        <end position="267"/>
    </location>
    <ligand>
        <name>deamido-NAD(+)</name>
        <dbReference type="ChEBI" id="CHEBI:58437"/>
    </ligand>
</feature>
<name>NADE_SHEB8</name>
<reference key="1">
    <citation type="submission" date="2007-07" db="EMBL/GenBank/DDBJ databases">
        <title>Complete sequence of chromosome of Shewanella baltica OS185.</title>
        <authorList>
            <consortium name="US DOE Joint Genome Institute"/>
            <person name="Copeland A."/>
            <person name="Lucas S."/>
            <person name="Lapidus A."/>
            <person name="Barry K."/>
            <person name="Glavina del Rio T."/>
            <person name="Dalin E."/>
            <person name="Tice H."/>
            <person name="Pitluck S."/>
            <person name="Sims D."/>
            <person name="Brettin T."/>
            <person name="Bruce D."/>
            <person name="Detter J.C."/>
            <person name="Han C."/>
            <person name="Schmutz J."/>
            <person name="Larimer F."/>
            <person name="Land M."/>
            <person name="Hauser L."/>
            <person name="Kyrpides N."/>
            <person name="Mikhailova N."/>
            <person name="Brettar I."/>
            <person name="Rodrigues J."/>
            <person name="Konstantinidis K."/>
            <person name="Tiedje J."/>
            <person name="Richardson P."/>
        </authorList>
    </citation>
    <scope>NUCLEOTIDE SEQUENCE [LARGE SCALE GENOMIC DNA]</scope>
    <source>
        <strain>OS185</strain>
    </source>
</reference>